<keyword id="KW-0687">Ribonucleoprotein</keyword>
<keyword id="KW-0689">Ribosomal protein</keyword>
<keyword id="KW-0694">RNA-binding</keyword>
<keyword id="KW-0699">rRNA-binding</keyword>
<accession>Q39EE0</accession>
<name>RS15_BURL3</name>
<evidence type="ECO:0000255" key="1">
    <source>
        <dbReference type="HAMAP-Rule" id="MF_01343"/>
    </source>
</evidence>
<evidence type="ECO:0000305" key="2"/>
<dbReference type="EMBL" id="CP000151">
    <property type="protein sequence ID" value="ABB09176.1"/>
    <property type="molecule type" value="Genomic_DNA"/>
</dbReference>
<dbReference type="RefSeq" id="WP_006398792.1">
    <property type="nucleotide sequence ID" value="NZ_WNDV01000048.1"/>
</dbReference>
<dbReference type="SMR" id="Q39EE0"/>
<dbReference type="GeneID" id="98107299"/>
<dbReference type="KEGG" id="bur:Bcep18194_A5582"/>
<dbReference type="HOGENOM" id="CLU_148518_0_0_4"/>
<dbReference type="Proteomes" id="UP000002705">
    <property type="component" value="Chromosome 1"/>
</dbReference>
<dbReference type="GO" id="GO:0022627">
    <property type="term" value="C:cytosolic small ribosomal subunit"/>
    <property type="evidence" value="ECO:0007669"/>
    <property type="project" value="TreeGrafter"/>
</dbReference>
<dbReference type="GO" id="GO:0019843">
    <property type="term" value="F:rRNA binding"/>
    <property type="evidence" value="ECO:0007669"/>
    <property type="project" value="UniProtKB-UniRule"/>
</dbReference>
<dbReference type="GO" id="GO:0003735">
    <property type="term" value="F:structural constituent of ribosome"/>
    <property type="evidence" value="ECO:0007669"/>
    <property type="project" value="InterPro"/>
</dbReference>
<dbReference type="GO" id="GO:0006412">
    <property type="term" value="P:translation"/>
    <property type="evidence" value="ECO:0007669"/>
    <property type="project" value="UniProtKB-UniRule"/>
</dbReference>
<dbReference type="CDD" id="cd00353">
    <property type="entry name" value="Ribosomal_S15p_S13e"/>
    <property type="match status" value="1"/>
</dbReference>
<dbReference type="FunFam" id="1.10.287.10:FF:000002">
    <property type="entry name" value="30S ribosomal protein S15"/>
    <property type="match status" value="1"/>
</dbReference>
<dbReference type="Gene3D" id="6.10.250.3130">
    <property type="match status" value="1"/>
</dbReference>
<dbReference type="Gene3D" id="1.10.287.10">
    <property type="entry name" value="S15/NS1, RNA-binding"/>
    <property type="match status" value="1"/>
</dbReference>
<dbReference type="HAMAP" id="MF_01343_B">
    <property type="entry name" value="Ribosomal_uS15_B"/>
    <property type="match status" value="1"/>
</dbReference>
<dbReference type="InterPro" id="IPR000589">
    <property type="entry name" value="Ribosomal_uS15"/>
</dbReference>
<dbReference type="InterPro" id="IPR005290">
    <property type="entry name" value="Ribosomal_uS15_bac-type"/>
</dbReference>
<dbReference type="InterPro" id="IPR009068">
    <property type="entry name" value="uS15_NS1_RNA-bd_sf"/>
</dbReference>
<dbReference type="NCBIfam" id="TIGR00952">
    <property type="entry name" value="S15_bact"/>
    <property type="match status" value="1"/>
</dbReference>
<dbReference type="PANTHER" id="PTHR23321">
    <property type="entry name" value="RIBOSOMAL PROTEIN S15, BACTERIAL AND ORGANELLAR"/>
    <property type="match status" value="1"/>
</dbReference>
<dbReference type="PANTHER" id="PTHR23321:SF26">
    <property type="entry name" value="SMALL RIBOSOMAL SUBUNIT PROTEIN US15M"/>
    <property type="match status" value="1"/>
</dbReference>
<dbReference type="Pfam" id="PF00312">
    <property type="entry name" value="Ribosomal_S15"/>
    <property type="match status" value="1"/>
</dbReference>
<dbReference type="SMART" id="SM01387">
    <property type="entry name" value="Ribosomal_S15"/>
    <property type="match status" value="1"/>
</dbReference>
<dbReference type="SUPFAM" id="SSF47060">
    <property type="entry name" value="S15/NS1 RNA-binding domain"/>
    <property type="match status" value="1"/>
</dbReference>
<dbReference type="PROSITE" id="PS00362">
    <property type="entry name" value="RIBOSOMAL_S15"/>
    <property type="match status" value="1"/>
</dbReference>
<comment type="function">
    <text evidence="1">One of the primary rRNA binding proteins, it binds directly to 16S rRNA where it helps nucleate assembly of the platform of the 30S subunit by binding and bridging several RNA helices of the 16S rRNA.</text>
</comment>
<comment type="function">
    <text evidence="1">Forms an intersubunit bridge (bridge B4) with the 23S rRNA of the 50S subunit in the ribosome.</text>
</comment>
<comment type="subunit">
    <text evidence="1">Part of the 30S ribosomal subunit. Forms a bridge to the 50S subunit in the 70S ribosome, contacting the 23S rRNA.</text>
</comment>
<comment type="similarity">
    <text evidence="1">Belongs to the universal ribosomal protein uS15 family.</text>
</comment>
<sequence>MSVADIKKSEVVAQFARGTNDTGSPEVQVALLTARIVELTGHFKTHAKDHHSRRGLLRMVSRRRKLLDYLKGKDADRYRALIEKLGLRK</sequence>
<gene>
    <name evidence="1" type="primary">rpsO</name>
    <name type="ordered locus">Bcep18194_A5582</name>
</gene>
<reference key="1">
    <citation type="submission" date="2005-10" db="EMBL/GenBank/DDBJ databases">
        <title>Complete sequence of chromosome 1 of Burkholderia sp. 383.</title>
        <authorList>
            <consortium name="US DOE Joint Genome Institute"/>
            <person name="Copeland A."/>
            <person name="Lucas S."/>
            <person name="Lapidus A."/>
            <person name="Barry K."/>
            <person name="Detter J.C."/>
            <person name="Glavina T."/>
            <person name="Hammon N."/>
            <person name="Israni S."/>
            <person name="Pitluck S."/>
            <person name="Chain P."/>
            <person name="Malfatti S."/>
            <person name="Shin M."/>
            <person name="Vergez L."/>
            <person name="Schmutz J."/>
            <person name="Larimer F."/>
            <person name="Land M."/>
            <person name="Kyrpides N."/>
            <person name="Lykidis A."/>
            <person name="Richardson P."/>
        </authorList>
    </citation>
    <scope>NUCLEOTIDE SEQUENCE [LARGE SCALE GENOMIC DNA]</scope>
    <source>
        <strain>ATCC 17760 / DSM 23089 / LMG 22485 / NCIMB 9086 / R18194 / 383</strain>
    </source>
</reference>
<feature type="chain" id="PRO_0000255482" description="Small ribosomal subunit protein uS15">
    <location>
        <begin position="1"/>
        <end position="89"/>
    </location>
</feature>
<proteinExistence type="inferred from homology"/>
<protein>
    <recommendedName>
        <fullName evidence="1">Small ribosomal subunit protein uS15</fullName>
    </recommendedName>
    <alternativeName>
        <fullName evidence="2">30S ribosomal protein S15</fullName>
    </alternativeName>
</protein>
<organism>
    <name type="scientific">Burkholderia lata (strain ATCC 17760 / DSM 23089 / LMG 22485 / NCIMB 9086 / R18194 / 383)</name>
    <dbReference type="NCBI Taxonomy" id="482957"/>
    <lineage>
        <taxon>Bacteria</taxon>
        <taxon>Pseudomonadati</taxon>
        <taxon>Pseudomonadota</taxon>
        <taxon>Betaproteobacteria</taxon>
        <taxon>Burkholderiales</taxon>
        <taxon>Burkholderiaceae</taxon>
        <taxon>Burkholderia</taxon>
        <taxon>Burkholderia cepacia complex</taxon>
    </lineage>
</organism>